<sequence>MTLSKTPPRIERFGDITEVIPLPNLTEVQVNSFKAFLQDDKAPDQREDVGLQSAFREVFPIDESEKGRSTGMVLDFIEYRLGEPEYSPEECREKDLTYEAPLYVKLELIHKDTGVIKGFKPDSPPESWVFLGNLPLMTFDGSFIINGADRVVISQIHRSPGVYFTSSYKGIKKQYTAAIIPMPKRGPWIELEFAGDVLEMKVNKRKFPVSLLLRVLGMDDASIRALFTEFTPEVEPGEDKSAGMGADEALLRLFTVLRPGDPPKRDKAIQYLFGLLADPRRYDLGEPGRFKMNTKLGVQRQERTLLKFEDGKFSDAGLVDTIRYLMALQQGLETVPMVDEDGVVTDVPVAEDDIDHLGNRRVRTVGELLADQLRVGMGRMARGVRERMLLGNPDAATPTKLVNNRPIVAAMREFFGRSQLSQFKDQTNPLSDLRHKRRISALGPGGLTRERAGFDVRDVHRTHYGRICPIETPEGANIGLISSLSSYAKVNDLGFIMAPYRKVEDGKVTNQVEYMTADIEDRYTIAQANSPLNEDNTFADERVLARRKGDPLLYTPDEVDYMDVSPKQIVSINTSLIPFLEHDDANRALMGSNMQSQAVPLVRADSPAVGTGVERRVVTDSGTSVVSDVNGRVSYVDARAIQVTLSEDHRELNMNAGNVRTFELIRFTRSNQGTNLDQHPIVSVGDEVKVGQVIADGPASERGRLALGQNITIAIMPFDGFNFEDAICINEDLVRQDFYTSVHIEKDEIEARDTKLGPEKITRDIPGLSEAALRDLDEDGIVRVGAEVKPGDILVGKTSFKGESEPTPEERLLRSIFGEKAREVKDTSLRVQSGQGGIVVKTVRFRRGDEGVDLKPGVREMVRVYVAQKRQLQVGDKVANRHGNKGVVSKIVRPEDMPYLEDGTPVDIVFNPLGVPSRMNLGQILETHLGEVARLTGQKFETPVFDSVTEATIKEMLEVAAAERLQARKDDGFELDKREQEVLDRAGKLGVIDAPGDDYEKGQMQLARTGKSILYDGRTGEPISGPVVVGIMYVMKLYHMVEDKLHARSTGPYSLITQQPLGGKAQFGGQRFGEMEVWALEAYGAAHVLQEMLTIKSDDIDGRDAAYQSIVKGEEVSGSTIPESFKVLVKELHSLGLDVEVLDHGDKAVDIFEGMMPKR</sequence>
<proteinExistence type="inferred from homology"/>
<comment type="function">
    <text evidence="1">DNA-dependent RNA polymerase catalyzes the transcription of DNA into RNA using the four ribonucleoside triphosphates as substrates.</text>
</comment>
<comment type="catalytic activity">
    <reaction evidence="1">
        <text>RNA(n) + a ribonucleoside 5'-triphosphate = RNA(n+1) + diphosphate</text>
        <dbReference type="Rhea" id="RHEA:21248"/>
        <dbReference type="Rhea" id="RHEA-COMP:14527"/>
        <dbReference type="Rhea" id="RHEA-COMP:17342"/>
        <dbReference type="ChEBI" id="CHEBI:33019"/>
        <dbReference type="ChEBI" id="CHEBI:61557"/>
        <dbReference type="ChEBI" id="CHEBI:140395"/>
        <dbReference type="EC" id="2.7.7.6"/>
    </reaction>
</comment>
<comment type="subunit">
    <text evidence="1">The RNAP catalytic core consists of 2 alpha, 1 beta, 1 beta' and 1 omega subunit. When a sigma factor is associated with the core the holoenzyme is formed, which can initiate transcription.</text>
</comment>
<comment type="similarity">
    <text evidence="1">Belongs to the RNA polymerase beta chain family.</text>
</comment>
<comment type="sequence caution" evidence="2">
    <conflict type="erroneous initiation">
        <sequence resource="EMBL-CDS" id="AAF10490"/>
    </conflict>
</comment>
<reference key="1">
    <citation type="journal article" date="1999" name="Science">
        <title>Genome sequence of the radioresistant bacterium Deinococcus radiodurans R1.</title>
        <authorList>
            <person name="White O."/>
            <person name="Eisen J.A."/>
            <person name="Heidelberg J.F."/>
            <person name="Hickey E.K."/>
            <person name="Peterson J.D."/>
            <person name="Dodson R.J."/>
            <person name="Haft D.H."/>
            <person name="Gwinn M.L."/>
            <person name="Nelson W.C."/>
            <person name="Richardson D.L."/>
            <person name="Moffat K.S."/>
            <person name="Qin H."/>
            <person name="Jiang L."/>
            <person name="Pamphile W."/>
            <person name="Crosby M."/>
            <person name="Shen M."/>
            <person name="Vamathevan J.J."/>
            <person name="Lam P."/>
            <person name="McDonald L.A."/>
            <person name="Utterback T.R."/>
            <person name="Zalewski C."/>
            <person name="Makarova K.S."/>
            <person name="Aravind L."/>
            <person name="Daly M.J."/>
            <person name="Minton K.W."/>
            <person name="Fleischmann R.D."/>
            <person name="Ketchum K.A."/>
            <person name="Nelson K.E."/>
            <person name="Salzberg S.L."/>
            <person name="Smith H.O."/>
            <person name="Venter J.C."/>
            <person name="Fraser C.M."/>
        </authorList>
    </citation>
    <scope>NUCLEOTIDE SEQUENCE [LARGE SCALE GENOMIC DNA]</scope>
    <source>
        <strain>ATCC 13939 / DSM 20539 / JCM 16871 / CCUG 27074 / LMG 4051 / NBRC 15346 / NCIMB 9279 / VKM B-1422 / R1</strain>
    </source>
</reference>
<accession>Q9RVV9</accession>
<gene>
    <name evidence="1" type="primary">rpoB</name>
    <name type="ordered locus">DR_0912</name>
</gene>
<dbReference type="EC" id="2.7.7.6" evidence="1"/>
<dbReference type="EMBL" id="AE000513">
    <property type="protein sequence ID" value="AAF10490.1"/>
    <property type="status" value="ALT_INIT"/>
    <property type="molecule type" value="Genomic_DNA"/>
</dbReference>
<dbReference type="PIR" id="G75459">
    <property type="entry name" value="G75459"/>
</dbReference>
<dbReference type="RefSeq" id="NP_294636.1">
    <property type="nucleotide sequence ID" value="NC_001263.1"/>
</dbReference>
<dbReference type="RefSeq" id="WP_027479684.1">
    <property type="nucleotide sequence ID" value="NC_001263.1"/>
</dbReference>
<dbReference type="SMR" id="Q9RVV9"/>
<dbReference type="FunCoup" id="Q9RVV9">
    <property type="interactions" value="433"/>
</dbReference>
<dbReference type="STRING" id="243230.DR_0912"/>
<dbReference type="PaxDb" id="243230-DR_0912"/>
<dbReference type="EnsemblBacteria" id="AAF10490">
    <property type="protein sequence ID" value="AAF10490"/>
    <property type="gene ID" value="DR_0912"/>
</dbReference>
<dbReference type="GeneID" id="69517157"/>
<dbReference type="KEGG" id="dra:DR_0912"/>
<dbReference type="PATRIC" id="fig|243230.17.peg.1099"/>
<dbReference type="eggNOG" id="COG0085">
    <property type="taxonomic scope" value="Bacteria"/>
</dbReference>
<dbReference type="HOGENOM" id="CLU_000524_4_1_0"/>
<dbReference type="InParanoid" id="Q9RVV9"/>
<dbReference type="OrthoDB" id="9803954at2"/>
<dbReference type="Proteomes" id="UP000002524">
    <property type="component" value="Chromosome 1"/>
</dbReference>
<dbReference type="GO" id="GO:0000428">
    <property type="term" value="C:DNA-directed RNA polymerase complex"/>
    <property type="evidence" value="ECO:0007669"/>
    <property type="project" value="UniProtKB-KW"/>
</dbReference>
<dbReference type="GO" id="GO:0003677">
    <property type="term" value="F:DNA binding"/>
    <property type="evidence" value="ECO:0007669"/>
    <property type="project" value="UniProtKB-UniRule"/>
</dbReference>
<dbReference type="GO" id="GO:0003899">
    <property type="term" value="F:DNA-directed RNA polymerase activity"/>
    <property type="evidence" value="ECO:0007669"/>
    <property type="project" value="UniProtKB-UniRule"/>
</dbReference>
<dbReference type="GO" id="GO:0032549">
    <property type="term" value="F:ribonucleoside binding"/>
    <property type="evidence" value="ECO:0007669"/>
    <property type="project" value="InterPro"/>
</dbReference>
<dbReference type="GO" id="GO:0006351">
    <property type="term" value="P:DNA-templated transcription"/>
    <property type="evidence" value="ECO:0007669"/>
    <property type="project" value="UniProtKB-UniRule"/>
</dbReference>
<dbReference type="CDD" id="cd00653">
    <property type="entry name" value="RNA_pol_B_RPB2"/>
    <property type="match status" value="1"/>
</dbReference>
<dbReference type="FunFam" id="3.90.1800.10:FF:000001">
    <property type="entry name" value="DNA-directed RNA polymerase subunit beta"/>
    <property type="match status" value="1"/>
</dbReference>
<dbReference type="Gene3D" id="2.40.50.100">
    <property type="match status" value="1"/>
</dbReference>
<dbReference type="Gene3D" id="2.40.50.150">
    <property type="match status" value="1"/>
</dbReference>
<dbReference type="Gene3D" id="3.90.1100.10">
    <property type="match status" value="1"/>
</dbReference>
<dbReference type="Gene3D" id="2.30.150.10">
    <property type="entry name" value="DNA-directed RNA polymerase, beta subunit, external 1 domain"/>
    <property type="match status" value="1"/>
</dbReference>
<dbReference type="Gene3D" id="2.40.270.10">
    <property type="entry name" value="DNA-directed RNA polymerase, subunit 2, domain 6"/>
    <property type="match status" value="1"/>
</dbReference>
<dbReference type="Gene3D" id="3.90.1800.10">
    <property type="entry name" value="RNA polymerase alpha subunit dimerisation domain"/>
    <property type="match status" value="1"/>
</dbReference>
<dbReference type="Gene3D" id="3.90.1110.10">
    <property type="entry name" value="RNA polymerase Rpb2, domain 2"/>
    <property type="match status" value="1"/>
</dbReference>
<dbReference type="HAMAP" id="MF_01321">
    <property type="entry name" value="RNApol_bact_RpoB"/>
    <property type="match status" value="1"/>
</dbReference>
<dbReference type="InterPro" id="IPR042107">
    <property type="entry name" value="DNA-dir_RNA_pol_bsu_ext_1_sf"/>
</dbReference>
<dbReference type="InterPro" id="IPR019462">
    <property type="entry name" value="DNA-dir_RNA_pol_bsu_external_1"/>
</dbReference>
<dbReference type="InterPro" id="IPR015712">
    <property type="entry name" value="DNA-dir_RNA_pol_su2"/>
</dbReference>
<dbReference type="InterPro" id="IPR007120">
    <property type="entry name" value="DNA-dir_RNAP_su2_dom"/>
</dbReference>
<dbReference type="InterPro" id="IPR037033">
    <property type="entry name" value="DNA-dir_RNAP_su2_hyb_sf"/>
</dbReference>
<dbReference type="InterPro" id="IPR010243">
    <property type="entry name" value="RNA_pol_bsu_bac"/>
</dbReference>
<dbReference type="InterPro" id="IPR007121">
    <property type="entry name" value="RNA_pol_bsu_CS"/>
</dbReference>
<dbReference type="InterPro" id="IPR007644">
    <property type="entry name" value="RNA_pol_bsu_protrusion"/>
</dbReference>
<dbReference type="InterPro" id="IPR007642">
    <property type="entry name" value="RNA_pol_Rpb2_2"/>
</dbReference>
<dbReference type="InterPro" id="IPR037034">
    <property type="entry name" value="RNA_pol_Rpb2_2_sf"/>
</dbReference>
<dbReference type="InterPro" id="IPR007645">
    <property type="entry name" value="RNA_pol_Rpb2_3"/>
</dbReference>
<dbReference type="InterPro" id="IPR007641">
    <property type="entry name" value="RNA_pol_Rpb2_7"/>
</dbReference>
<dbReference type="InterPro" id="IPR014724">
    <property type="entry name" value="RNA_pol_RPB2_OB-fold"/>
</dbReference>
<dbReference type="NCBIfam" id="NF001616">
    <property type="entry name" value="PRK00405.1"/>
    <property type="match status" value="1"/>
</dbReference>
<dbReference type="NCBIfam" id="TIGR02013">
    <property type="entry name" value="rpoB"/>
    <property type="match status" value="1"/>
</dbReference>
<dbReference type="PANTHER" id="PTHR20856">
    <property type="entry name" value="DNA-DIRECTED RNA POLYMERASE I SUBUNIT 2"/>
    <property type="match status" value="1"/>
</dbReference>
<dbReference type="Pfam" id="PF04563">
    <property type="entry name" value="RNA_pol_Rpb2_1"/>
    <property type="match status" value="1"/>
</dbReference>
<dbReference type="Pfam" id="PF04561">
    <property type="entry name" value="RNA_pol_Rpb2_2"/>
    <property type="match status" value="1"/>
</dbReference>
<dbReference type="Pfam" id="PF04565">
    <property type="entry name" value="RNA_pol_Rpb2_3"/>
    <property type="match status" value="1"/>
</dbReference>
<dbReference type="Pfam" id="PF10385">
    <property type="entry name" value="RNA_pol_Rpb2_45"/>
    <property type="match status" value="1"/>
</dbReference>
<dbReference type="Pfam" id="PF00562">
    <property type="entry name" value="RNA_pol_Rpb2_6"/>
    <property type="match status" value="1"/>
</dbReference>
<dbReference type="Pfam" id="PF04560">
    <property type="entry name" value="RNA_pol_Rpb2_7"/>
    <property type="match status" value="1"/>
</dbReference>
<dbReference type="SUPFAM" id="SSF64484">
    <property type="entry name" value="beta and beta-prime subunits of DNA dependent RNA-polymerase"/>
    <property type="match status" value="1"/>
</dbReference>
<dbReference type="PROSITE" id="PS01166">
    <property type="entry name" value="RNA_POL_BETA"/>
    <property type="match status" value="1"/>
</dbReference>
<evidence type="ECO:0000255" key="1">
    <source>
        <dbReference type="HAMAP-Rule" id="MF_01321"/>
    </source>
</evidence>
<evidence type="ECO:0000305" key="2"/>
<keyword id="KW-0240">DNA-directed RNA polymerase</keyword>
<keyword id="KW-0548">Nucleotidyltransferase</keyword>
<keyword id="KW-1185">Reference proteome</keyword>
<keyword id="KW-0804">Transcription</keyword>
<keyword id="KW-0808">Transferase</keyword>
<name>RPOB_DEIRA</name>
<feature type="chain" id="PRO_0000047891" description="DNA-directed RNA polymerase subunit beta">
    <location>
        <begin position="1"/>
        <end position="1159"/>
    </location>
</feature>
<organism>
    <name type="scientific">Deinococcus radiodurans (strain ATCC 13939 / DSM 20539 / JCM 16871 / CCUG 27074 / LMG 4051 / NBRC 15346 / NCIMB 9279 / VKM B-1422 / R1)</name>
    <dbReference type="NCBI Taxonomy" id="243230"/>
    <lineage>
        <taxon>Bacteria</taxon>
        <taxon>Thermotogati</taxon>
        <taxon>Deinococcota</taxon>
        <taxon>Deinococci</taxon>
        <taxon>Deinococcales</taxon>
        <taxon>Deinococcaceae</taxon>
        <taxon>Deinococcus</taxon>
    </lineage>
</organism>
<protein>
    <recommendedName>
        <fullName evidence="1">DNA-directed RNA polymerase subunit beta</fullName>
        <shortName evidence="1">RNAP subunit beta</shortName>
        <ecNumber evidence="1">2.7.7.6</ecNumber>
    </recommendedName>
    <alternativeName>
        <fullName evidence="1">RNA polymerase subunit beta</fullName>
    </alternativeName>
    <alternativeName>
        <fullName evidence="1">Transcriptase subunit beta</fullName>
    </alternativeName>
</protein>